<organism>
    <name type="scientific">Pediococcus pentosaceus (strain ATCC 25745 / CCUG 21536 / LMG 10740 / 183-1w)</name>
    <dbReference type="NCBI Taxonomy" id="278197"/>
    <lineage>
        <taxon>Bacteria</taxon>
        <taxon>Bacillati</taxon>
        <taxon>Bacillota</taxon>
        <taxon>Bacilli</taxon>
        <taxon>Lactobacillales</taxon>
        <taxon>Lactobacillaceae</taxon>
        <taxon>Pediococcus</taxon>
    </lineage>
</organism>
<accession>Q03F77</accession>
<name>Y1090_PEDPA</name>
<gene>
    <name type="ordered locus">PEPE_1090</name>
</gene>
<feature type="chain" id="PRO_0000388916" description="UPF0756 membrane protein PEPE_1090">
    <location>
        <begin position="1"/>
        <end position="152"/>
    </location>
</feature>
<feature type="transmembrane region" description="Helical" evidence="1">
    <location>
        <begin position="4"/>
        <end position="24"/>
    </location>
</feature>
<feature type="transmembrane region" description="Helical" evidence="1">
    <location>
        <begin position="52"/>
        <end position="72"/>
    </location>
</feature>
<feature type="transmembrane region" description="Helical" evidence="1">
    <location>
        <begin position="85"/>
        <end position="105"/>
    </location>
</feature>
<feature type="transmembrane region" description="Helical" evidence="1">
    <location>
        <begin position="115"/>
        <end position="135"/>
    </location>
</feature>
<protein>
    <recommendedName>
        <fullName evidence="1">UPF0756 membrane protein PEPE_1090</fullName>
    </recommendedName>
</protein>
<evidence type="ECO:0000255" key="1">
    <source>
        <dbReference type="HAMAP-Rule" id="MF_01874"/>
    </source>
</evidence>
<proteinExistence type="inferred from homology"/>
<sequence>MESWLFLIGIFIVALLGKNQSLIIASIVVLFLKLIPYSDKIFPLLNKQGINWGVTIISITILVPIATGKIGFMDLVNSFKSPVGWIAVACGILVSLLSYQGVGFLSASPEVTVALVMGTIIGVVFMNGIAAGPIIASGIAYLIIQLLQIQIK</sequence>
<keyword id="KW-1003">Cell membrane</keyword>
<keyword id="KW-0472">Membrane</keyword>
<keyword id="KW-0812">Transmembrane</keyword>
<keyword id="KW-1133">Transmembrane helix</keyword>
<reference key="1">
    <citation type="journal article" date="2006" name="Proc. Natl. Acad. Sci. U.S.A.">
        <title>Comparative genomics of the lactic acid bacteria.</title>
        <authorList>
            <person name="Makarova K.S."/>
            <person name="Slesarev A."/>
            <person name="Wolf Y.I."/>
            <person name="Sorokin A."/>
            <person name="Mirkin B."/>
            <person name="Koonin E.V."/>
            <person name="Pavlov A."/>
            <person name="Pavlova N."/>
            <person name="Karamychev V."/>
            <person name="Polouchine N."/>
            <person name="Shakhova V."/>
            <person name="Grigoriev I."/>
            <person name="Lou Y."/>
            <person name="Rohksar D."/>
            <person name="Lucas S."/>
            <person name="Huang K."/>
            <person name="Goodstein D.M."/>
            <person name="Hawkins T."/>
            <person name="Plengvidhya V."/>
            <person name="Welker D."/>
            <person name="Hughes J."/>
            <person name="Goh Y."/>
            <person name="Benson A."/>
            <person name="Baldwin K."/>
            <person name="Lee J.-H."/>
            <person name="Diaz-Muniz I."/>
            <person name="Dosti B."/>
            <person name="Smeianov V."/>
            <person name="Wechter W."/>
            <person name="Barabote R."/>
            <person name="Lorca G."/>
            <person name="Altermann E."/>
            <person name="Barrangou R."/>
            <person name="Ganesan B."/>
            <person name="Xie Y."/>
            <person name="Rawsthorne H."/>
            <person name="Tamir D."/>
            <person name="Parker C."/>
            <person name="Breidt F."/>
            <person name="Broadbent J.R."/>
            <person name="Hutkins R."/>
            <person name="O'Sullivan D."/>
            <person name="Steele J."/>
            <person name="Unlu G."/>
            <person name="Saier M.H. Jr."/>
            <person name="Klaenhammer T."/>
            <person name="Richardson P."/>
            <person name="Kozyavkin S."/>
            <person name="Weimer B.C."/>
            <person name="Mills D.A."/>
        </authorList>
    </citation>
    <scope>NUCLEOTIDE SEQUENCE [LARGE SCALE GENOMIC DNA]</scope>
    <source>
        <strain>ATCC 25745 / CCUG 21536 / LMG 10740 / 183-1w</strain>
    </source>
</reference>
<comment type="subcellular location">
    <subcellularLocation>
        <location evidence="1">Cell membrane</location>
        <topology evidence="1">Multi-pass membrane protein</topology>
    </subcellularLocation>
</comment>
<comment type="similarity">
    <text evidence="1">Belongs to the UPF0756 family.</text>
</comment>
<dbReference type="EMBL" id="CP000422">
    <property type="protein sequence ID" value="ABJ68145.1"/>
    <property type="molecule type" value="Genomic_DNA"/>
</dbReference>
<dbReference type="RefSeq" id="WP_011673484.1">
    <property type="nucleotide sequence ID" value="NC_008525.1"/>
</dbReference>
<dbReference type="STRING" id="278197.PEPE_1090"/>
<dbReference type="GeneID" id="33062807"/>
<dbReference type="KEGG" id="ppe:PEPE_1090"/>
<dbReference type="eggNOG" id="COG2707">
    <property type="taxonomic scope" value="Bacteria"/>
</dbReference>
<dbReference type="HOGENOM" id="CLU_125889_1_0_9"/>
<dbReference type="OrthoDB" id="80306at2"/>
<dbReference type="Proteomes" id="UP000000773">
    <property type="component" value="Chromosome"/>
</dbReference>
<dbReference type="GO" id="GO:0005886">
    <property type="term" value="C:plasma membrane"/>
    <property type="evidence" value="ECO:0007669"/>
    <property type="project" value="UniProtKB-SubCell"/>
</dbReference>
<dbReference type="HAMAP" id="MF_01874">
    <property type="entry name" value="UPF0756"/>
    <property type="match status" value="1"/>
</dbReference>
<dbReference type="InterPro" id="IPR007382">
    <property type="entry name" value="UPF0756_TM"/>
</dbReference>
<dbReference type="PANTHER" id="PTHR38452">
    <property type="entry name" value="UPF0756 MEMBRANE PROTEIN YEAL"/>
    <property type="match status" value="1"/>
</dbReference>
<dbReference type="PANTHER" id="PTHR38452:SF1">
    <property type="entry name" value="UPF0756 MEMBRANE PROTEIN YEAL"/>
    <property type="match status" value="1"/>
</dbReference>
<dbReference type="Pfam" id="PF04284">
    <property type="entry name" value="DUF441"/>
    <property type="match status" value="1"/>
</dbReference>